<name>DHC1_ALTCI</name>
<evidence type="ECO:0000255" key="1"/>
<evidence type="ECO:0000255" key="2">
    <source>
        <dbReference type="PROSITE-ProRule" id="PRU00258"/>
    </source>
</evidence>
<evidence type="ECO:0000256" key="3">
    <source>
        <dbReference type="SAM" id="MobiDB-lite"/>
    </source>
</evidence>
<evidence type="ECO:0000269" key="4">
    <source>
    </source>
</evidence>
<evidence type="ECO:0000303" key="5">
    <source>
    </source>
</evidence>
<evidence type="ECO:0000305" key="6"/>
<evidence type="ECO:0000305" key="7">
    <source>
    </source>
</evidence>
<protein>
    <recommendedName>
        <fullName evidence="6">Polyketide synthase-related protein Dhc1</fullName>
        <ecNumber evidence="6">2.3.1.-</ecNumber>
    </recommendedName>
    <alternativeName>
        <fullName evidence="5">Dehydrocurvularin biosynthesis protein 1</fullName>
    </alternativeName>
</protein>
<comment type="function">
    <text evidence="4">Polyketide synthase-related protein; part of the gene cluster that mediates the biosynthesis of 10,11-dehydrocurvularin, a prevalent fungal phytotoxin with heat shock response and immune-modulatory activities (PubMed:26493380). The highly reducing polyketide synthase Dhc3 is responsible for biosynthesis up to the tetraketide stage (PubMed:26493380). The non-reducing polyketide synthase Dhc5 then conducts four additional chain extension cycles, producing the unreduced part of the nascent octaketide from C-1 to C-8 in 10,11-dehydrocurvularin (PubMed:26493380). The role of Dhc1 in 10,11-dehydrocurvularin biosynthesis has not been identified yet (PubMed:26493380).</text>
</comment>
<comment type="pathway">
    <text evidence="7">Mycotoxin biosynthesis.</text>
</comment>
<proteinExistence type="evidence at transcript level"/>
<accession>A0A0N7D483</accession>
<feature type="chain" id="PRO_0000438391" description="Polyketide synthase-related protein Dhc1">
    <location>
        <begin position="1"/>
        <end position="477"/>
    </location>
</feature>
<feature type="domain" description="Carrier" evidence="2">
    <location>
        <begin position="34"/>
        <end position="112"/>
    </location>
</feature>
<feature type="region of interest" description="Ketoreductase (KR) domain" evidence="1">
    <location>
        <begin position="161"/>
        <end position="322"/>
    </location>
</feature>
<feature type="region of interest" description="Disordered" evidence="3">
    <location>
        <begin position="410"/>
        <end position="435"/>
    </location>
</feature>
<feature type="compositionally biased region" description="Low complexity" evidence="3">
    <location>
        <begin position="411"/>
        <end position="422"/>
    </location>
</feature>
<feature type="compositionally biased region" description="Basic and acidic residues" evidence="3">
    <location>
        <begin position="424"/>
        <end position="435"/>
    </location>
</feature>
<feature type="modified residue" description="O-(pantetheine 4'-phosphoryl)serine" evidence="2">
    <location>
        <position position="72"/>
    </location>
</feature>
<reference key="1">
    <citation type="journal article" date="2015" name="ChemBioChem">
        <title>Comparison of 10,11-dehydrocurvularin polyketide synthases from Alternaria cinerariae and Aspergillus terreus highlights key structural motifs.</title>
        <authorList>
            <person name="Cochrane R.V."/>
            <person name="Gao Z."/>
            <person name="Lambkin G.R."/>
            <person name="Xu W."/>
            <person name="Winter J.M."/>
            <person name="Marcus S.L."/>
            <person name="Tang Y."/>
            <person name="Vederas J.C."/>
        </authorList>
    </citation>
    <scope>NUCLEOTIDE SEQUENCE [MRNA]</scope>
    <scope>FUNCTION</scope>
    <scope>PATHWAY</scope>
    <source>
        <strain>ATCC 11784</strain>
    </source>
</reference>
<reference key="2">
    <citation type="submission" date="2015-07" db="EMBL/GenBank/DDBJ databases">
        <authorList>
            <person name="Cajimat M.N.B."/>
            <person name="Milazzo M.L."/>
            <person name="Fulhorst C.F."/>
        </authorList>
    </citation>
    <scope>NUCLEOTIDE SEQUENCE [MRNA]</scope>
    <source>
        <strain>ATCC 11784</strain>
    </source>
</reference>
<keyword id="KW-0560">Oxidoreductase</keyword>
<keyword id="KW-0596">Phosphopantetheine</keyword>
<keyword id="KW-0597">Phosphoprotein</keyword>
<keyword id="KW-0808">Transferase</keyword>
<organism>
    <name type="scientific">Alternaria cinerariae</name>
    <dbReference type="NCBI Taxonomy" id="216837"/>
    <lineage>
        <taxon>Eukaryota</taxon>
        <taxon>Fungi</taxon>
        <taxon>Dikarya</taxon>
        <taxon>Ascomycota</taxon>
        <taxon>Pezizomycotina</taxon>
        <taxon>Dothideomycetes</taxon>
        <taxon>Pleosporomycetidae</taxon>
        <taxon>Pleosporales</taxon>
        <taxon>Pleosporineae</taxon>
        <taxon>Pleosporaceae</taxon>
        <taxon>Alternaria</taxon>
        <taxon>Alternaria sect. Sonchi</taxon>
    </lineage>
</organism>
<gene>
    <name evidence="5" type="primary">Dhc1</name>
</gene>
<dbReference type="EC" id="2.3.1.-" evidence="6"/>
<dbReference type="EMBL" id="KT271470">
    <property type="protein sequence ID" value="AKQ49199.1"/>
    <property type="molecule type" value="mRNA"/>
</dbReference>
<dbReference type="SMR" id="A0A0N7D483"/>
<dbReference type="GO" id="GO:0016491">
    <property type="term" value="F:oxidoreductase activity"/>
    <property type="evidence" value="ECO:0007669"/>
    <property type="project" value="UniProtKB-KW"/>
</dbReference>
<dbReference type="GO" id="GO:0031177">
    <property type="term" value="F:phosphopantetheine binding"/>
    <property type="evidence" value="ECO:0007669"/>
    <property type="project" value="InterPro"/>
</dbReference>
<dbReference type="GO" id="GO:0016740">
    <property type="term" value="F:transferase activity"/>
    <property type="evidence" value="ECO:0007669"/>
    <property type="project" value="UniProtKB-KW"/>
</dbReference>
<dbReference type="GO" id="GO:0009058">
    <property type="term" value="P:biosynthetic process"/>
    <property type="evidence" value="ECO:0007669"/>
    <property type="project" value="UniProtKB-ARBA"/>
</dbReference>
<dbReference type="Gene3D" id="1.10.1200.10">
    <property type="entry name" value="ACP-like"/>
    <property type="match status" value="1"/>
</dbReference>
<dbReference type="Gene3D" id="3.40.50.720">
    <property type="entry name" value="NAD(P)-binding Rossmann-like Domain"/>
    <property type="match status" value="1"/>
</dbReference>
<dbReference type="InterPro" id="IPR036736">
    <property type="entry name" value="ACP-like_sf"/>
</dbReference>
<dbReference type="InterPro" id="IPR013120">
    <property type="entry name" value="Far_NAD-bd"/>
</dbReference>
<dbReference type="InterPro" id="IPR036291">
    <property type="entry name" value="NAD(P)-bd_dom_sf"/>
</dbReference>
<dbReference type="InterPro" id="IPR020806">
    <property type="entry name" value="PKS_PP-bd"/>
</dbReference>
<dbReference type="InterPro" id="IPR009081">
    <property type="entry name" value="PP-bd_ACP"/>
</dbReference>
<dbReference type="PANTHER" id="PTHR44845:SF6">
    <property type="entry name" value="BETA-ALANINE-ACTIVATING ENZYME"/>
    <property type="match status" value="1"/>
</dbReference>
<dbReference type="PANTHER" id="PTHR44845">
    <property type="entry name" value="CARRIER DOMAIN-CONTAINING PROTEIN"/>
    <property type="match status" value="1"/>
</dbReference>
<dbReference type="Pfam" id="PF07993">
    <property type="entry name" value="NAD_binding_4"/>
    <property type="match status" value="1"/>
</dbReference>
<dbReference type="Pfam" id="PF00550">
    <property type="entry name" value="PP-binding"/>
    <property type="match status" value="1"/>
</dbReference>
<dbReference type="SMART" id="SM00823">
    <property type="entry name" value="PKS_PP"/>
    <property type="match status" value="1"/>
</dbReference>
<dbReference type="SUPFAM" id="SSF47336">
    <property type="entry name" value="ACP-like"/>
    <property type="match status" value="1"/>
</dbReference>
<dbReference type="SUPFAM" id="SSF51735">
    <property type="entry name" value="NAD(P)-binding Rossmann-fold domains"/>
    <property type="match status" value="1"/>
</dbReference>
<dbReference type="PROSITE" id="PS50075">
    <property type="entry name" value="CARRIER"/>
    <property type="match status" value="1"/>
</dbReference>
<sequence length="477" mass="51984">MPKTPNGKLDRKSIAALLLRNAKRDMNGVVNDVEKMTVREGELRLLWERVLPTLGDLRLGPSSDFFMCGGNSMLLMKLQKAIKETTGIRVSTKDLYESSTLRAMTHCVFDRANRADDDAAPIDWAVETSLPASLQTQIQDLATSSPPEAGGHGTNGTEVLLTGATSFLGSHLLRSLLSSPRVKKVHCVAVPADEQATLFSHDTRIVCYSGTLLSPTLGVTPQERRTLEQSVHVIVHAGAHGHCLNRFDSLRAPNLQSLHFLATLALPRCVTILFLSSSRVVLLSGDTAPAPASMRSYPPAVDGKDGYTASKWAGEVFLENLVAHVENVASSASSPSVFWRSSLNVEVHRACTLVSESAPNSDAMNAILRHSLDMRCAPRLERAEGYLDFAPMESIVAKITVHAVEMATAVQQQQQQQQRQSQPPRDDAADGSPTERARGLRIAITLAVSSRPWATLGRIWRGRMVGDPKNWIYKSGL</sequence>